<comment type="subcellular location">
    <subcellularLocation>
        <location evidence="3">Secreted</location>
    </subcellularLocation>
</comment>
<comment type="similarity">
    <text evidence="3">Belongs to the Ole e I family.</text>
</comment>
<comment type="sequence caution" evidence="3">
    <conflict type="erroneous gene model prediction">
        <sequence resource="EMBL-CDS" id="CAA16739"/>
    </conflict>
    <text>The predicted gene At4g18590 has been split into 3 genes: At4g18590, At4g18593 and At4g18596.</text>
</comment>
<comment type="sequence caution" evidence="3">
    <conflict type="erroneous gene model prediction">
        <sequence resource="EMBL-CDS" id="CAB78861"/>
    </conflict>
    <text>The predicted gene At4g18590 has been split into 3 genes: At4g18590, At4g18593 and At4g18596.</text>
</comment>
<feature type="signal peptide" evidence="2">
    <location>
        <begin position="1"/>
        <end position="27"/>
    </location>
</feature>
<feature type="chain" id="PRO_0000422639" description="Pollen-specific protein-like At4g18596">
    <location>
        <begin position="28"/>
        <end position="172"/>
    </location>
</feature>
<feature type="glycosylation site" description="N-linked (GlcNAc...) asparagine" evidence="2">
    <location>
        <position position="70"/>
    </location>
</feature>
<feature type="disulfide bond" evidence="1">
    <location>
        <begin position="41"/>
        <end position="112"/>
    </location>
</feature>
<feature type="disulfide bond" evidence="1">
    <location>
        <begin position="44"/>
        <end position="157"/>
    </location>
</feature>
<feature type="disulfide bond" evidence="1">
    <location>
        <begin position="65"/>
        <end position="100"/>
    </location>
</feature>
<protein>
    <recommendedName>
        <fullName>Pollen-specific protein-like At4g18596</fullName>
    </recommendedName>
</protein>
<organism>
    <name type="scientific">Arabidopsis thaliana</name>
    <name type="common">Mouse-ear cress</name>
    <dbReference type="NCBI Taxonomy" id="3702"/>
    <lineage>
        <taxon>Eukaryota</taxon>
        <taxon>Viridiplantae</taxon>
        <taxon>Streptophyta</taxon>
        <taxon>Embryophyta</taxon>
        <taxon>Tracheophyta</taxon>
        <taxon>Spermatophyta</taxon>
        <taxon>Magnoliopsida</taxon>
        <taxon>eudicotyledons</taxon>
        <taxon>Gunneridae</taxon>
        <taxon>Pentapetalae</taxon>
        <taxon>rosids</taxon>
        <taxon>malvids</taxon>
        <taxon>Brassicales</taxon>
        <taxon>Brassicaceae</taxon>
        <taxon>Camelineae</taxon>
        <taxon>Arabidopsis</taxon>
    </lineage>
</organism>
<gene>
    <name type="ordered locus">At4g18596</name>
    <name type="ORF">F28J12.250</name>
</gene>
<accession>Q6NMJ2</accession>
<accession>O49527</accession>
<proteinExistence type="evidence at transcript level"/>
<keyword id="KW-1015">Disulfide bond</keyword>
<keyword id="KW-0325">Glycoprotein</keyword>
<keyword id="KW-1185">Reference proteome</keyword>
<keyword id="KW-0964">Secreted</keyword>
<keyword id="KW-0732">Signal</keyword>
<reference key="1">
    <citation type="journal article" date="1999" name="Nature">
        <title>Sequence and analysis of chromosome 4 of the plant Arabidopsis thaliana.</title>
        <authorList>
            <person name="Mayer K.F.X."/>
            <person name="Schueller C."/>
            <person name="Wambutt R."/>
            <person name="Murphy G."/>
            <person name="Volckaert G."/>
            <person name="Pohl T."/>
            <person name="Duesterhoeft A."/>
            <person name="Stiekema W."/>
            <person name="Entian K.-D."/>
            <person name="Terryn N."/>
            <person name="Harris B."/>
            <person name="Ansorge W."/>
            <person name="Brandt P."/>
            <person name="Grivell L.A."/>
            <person name="Rieger M."/>
            <person name="Weichselgartner M."/>
            <person name="de Simone V."/>
            <person name="Obermaier B."/>
            <person name="Mache R."/>
            <person name="Mueller M."/>
            <person name="Kreis M."/>
            <person name="Delseny M."/>
            <person name="Puigdomenech P."/>
            <person name="Watson M."/>
            <person name="Schmidtheini T."/>
            <person name="Reichert B."/>
            <person name="Portetelle D."/>
            <person name="Perez-Alonso M."/>
            <person name="Boutry M."/>
            <person name="Bancroft I."/>
            <person name="Vos P."/>
            <person name="Hoheisel J."/>
            <person name="Zimmermann W."/>
            <person name="Wedler H."/>
            <person name="Ridley P."/>
            <person name="Langham S.-A."/>
            <person name="McCullagh B."/>
            <person name="Bilham L."/>
            <person name="Robben J."/>
            <person name="van der Schueren J."/>
            <person name="Grymonprez B."/>
            <person name="Chuang Y.-J."/>
            <person name="Vandenbussche F."/>
            <person name="Braeken M."/>
            <person name="Weltjens I."/>
            <person name="Voet M."/>
            <person name="Bastiaens I."/>
            <person name="Aert R."/>
            <person name="Defoor E."/>
            <person name="Weitzenegger T."/>
            <person name="Bothe G."/>
            <person name="Ramsperger U."/>
            <person name="Hilbert H."/>
            <person name="Braun M."/>
            <person name="Holzer E."/>
            <person name="Brandt A."/>
            <person name="Peters S."/>
            <person name="van Staveren M."/>
            <person name="Dirkse W."/>
            <person name="Mooijman P."/>
            <person name="Klein Lankhorst R."/>
            <person name="Rose M."/>
            <person name="Hauf J."/>
            <person name="Koetter P."/>
            <person name="Berneiser S."/>
            <person name="Hempel S."/>
            <person name="Feldpausch M."/>
            <person name="Lamberth S."/>
            <person name="Van den Daele H."/>
            <person name="De Keyser A."/>
            <person name="Buysshaert C."/>
            <person name="Gielen J."/>
            <person name="Villarroel R."/>
            <person name="De Clercq R."/>
            <person name="van Montagu M."/>
            <person name="Rogers J."/>
            <person name="Cronin A."/>
            <person name="Quail M.A."/>
            <person name="Bray-Allen S."/>
            <person name="Clark L."/>
            <person name="Doggett J."/>
            <person name="Hall S."/>
            <person name="Kay M."/>
            <person name="Lennard N."/>
            <person name="McLay K."/>
            <person name="Mayes R."/>
            <person name="Pettett A."/>
            <person name="Rajandream M.A."/>
            <person name="Lyne M."/>
            <person name="Benes V."/>
            <person name="Rechmann S."/>
            <person name="Borkova D."/>
            <person name="Bloecker H."/>
            <person name="Scharfe M."/>
            <person name="Grimm M."/>
            <person name="Loehnert T.-H."/>
            <person name="Dose S."/>
            <person name="de Haan M."/>
            <person name="Maarse A.C."/>
            <person name="Schaefer M."/>
            <person name="Mueller-Auer S."/>
            <person name="Gabel C."/>
            <person name="Fuchs M."/>
            <person name="Fartmann B."/>
            <person name="Granderath K."/>
            <person name="Dauner D."/>
            <person name="Herzl A."/>
            <person name="Neumann S."/>
            <person name="Argiriou A."/>
            <person name="Vitale D."/>
            <person name="Liguori R."/>
            <person name="Piravandi E."/>
            <person name="Massenet O."/>
            <person name="Quigley F."/>
            <person name="Clabauld G."/>
            <person name="Muendlein A."/>
            <person name="Felber R."/>
            <person name="Schnabl S."/>
            <person name="Hiller R."/>
            <person name="Schmidt W."/>
            <person name="Lecharny A."/>
            <person name="Aubourg S."/>
            <person name="Chefdor F."/>
            <person name="Cooke R."/>
            <person name="Berger C."/>
            <person name="Monfort A."/>
            <person name="Casacuberta E."/>
            <person name="Gibbons T."/>
            <person name="Weber N."/>
            <person name="Vandenbol M."/>
            <person name="Bargues M."/>
            <person name="Terol J."/>
            <person name="Torres A."/>
            <person name="Perez-Perez A."/>
            <person name="Purnelle B."/>
            <person name="Bent E."/>
            <person name="Johnson S."/>
            <person name="Tacon D."/>
            <person name="Jesse T."/>
            <person name="Heijnen L."/>
            <person name="Schwarz S."/>
            <person name="Scholler P."/>
            <person name="Heber S."/>
            <person name="Francs P."/>
            <person name="Bielke C."/>
            <person name="Frishman D."/>
            <person name="Haase D."/>
            <person name="Lemcke K."/>
            <person name="Mewes H.-W."/>
            <person name="Stocker S."/>
            <person name="Zaccaria P."/>
            <person name="Bevan M."/>
            <person name="Wilson R.K."/>
            <person name="de la Bastide M."/>
            <person name="Habermann K."/>
            <person name="Parnell L."/>
            <person name="Dedhia N."/>
            <person name="Gnoj L."/>
            <person name="Schutz K."/>
            <person name="Huang E."/>
            <person name="Spiegel L."/>
            <person name="Sekhon M."/>
            <person name="Murray J."/>
            <person name="Sheet P."/>
            <person name="Cordes M."/>
            <person name="Abu-Threideh J."/>
            <person name="Stoneking T."/>
            <person name="Kalicki J."/>
            <person name="Graves T."/>
            <person name="Harmon G."/>
            <person name="Edwards J."/>
            <person name="Latreille P."/>
            <person name="Courtney L."/>
            <person name="Cloud J."/>
            <person name="Abbott A."/>
            <person name="Scott K."/>
            <person name="Johnson D."/>
            <person name="Minx P."/>
            <person name="Bentley D."/>
            <person name="Fulton B."/>
            <person name="Miller N."/>
            <person name="Greco T."/>
            <person name="Kemp K."/>
            <person name="Kramer J."/>
            <person name="Fulton L."/>
            <person name="Mardis E."/>
            <person name="Dante M."/>
            <person name="Pepin K."/>
            <person name="Hillier L.W."/>
            <person name="Nelson J."/>
            <person name="Spieth J."/>
            <person name="Ryan E."/>
            <person name="Andrews S."/>
            <person name="Geisel C."/>
            <person name="Layman D."/>
            <person name="Du H."/>
            <person name="Ali J."/>
            <person name="Berghoff A."/>
            <person name="Jones K."/>
            <person name="Drone K."/>
            <person name="Cotton M."/>
            <person name="Joshu C."/>
            <person name="Antonoiu B."/>
            <person name="Zidanic M."/>
            <person name="Strong C."/>
            <person name="Sun H."/>
            <person name="Lamar B."/>
            <person name="Yordan C."/>
            <person name="Ma P."/>
            <person name="Zhong J."/>
            <person name="Preston R."/>
            <person name="Vil D."/>
            <person name="Shekher M."/>
            <person name="Matero A."/>
            <person name="Shah R."/>
            <person name="Swaby I.K."/>
            <person name="O'Shaughnessy A."/>
            <person name="Rodriguez M."/>
            <person name="Hoffman J."/>
            <person name="Till S."/>
            <person name="Granat S."/>
            <person name="Shohdy N."/>
            <person name="Hasegawa A."/>
            <person name="Hameed A."/>
            <person name="Lodhi M."/>
            <person name="Johnson A."/>
            <person name="Chen E."/>
            <person name="Marra M.A."/>
            <person name="Martienssen R."/>
            <person name="McCombie W.R."/>
        </authorList>
    </citation>
    <scope>NUCLEOTIDE SEQUENCE [LARGE SCALE GENOMIC DNA]</scope>
    <source>
        <strain>cv. Columbia</strain>
    </source>
</reference>
<reference key="2">
    <citation type="journal article" date="2017" name="Plant J.">
        <title>Araport11: a complete reannotation of the Arabidopsis thaliana reference genome.</title>
        <authorList>
            <person name="Cheng C.Y."/>
            <person name="Krishnakumar V."/>
            <person name="Chan A.P."/>
            <person name="Thibaud-Nissen F."/>
            <person name="Schobel S."/>
            <person name="Town C.D."/>
        </authorList>
    </citation>
    <scope>GENOME REANNOTATION</scope>
    <source>
        <strain>cv. Columbia</strain>
    </source>
</reference>
<reference key="3">
    <citation type="submission" date="2004-02" db="EMBL/GenBank/DDBJ databases">
        <title>Arabidopsis ORF clones.</title>
        <authorList>
            <person name="Kim C.J."/>
            <person name="Chen H."/>
            <person name="Cheuk R.F."/>
            <person name="Shinn P."/>
            <person name="Ecker J.R."/>
        </authorList>
    </citation>
    <scope>NUCLEOTIDE SEQUENCE [LARGE SCALE MRNA]</scope>
    <source>
        <strain>cv. Columbia</strain>
    </source>
</reference>
<reference key="4">
    <citation type="submission" date="2005-03" db="EMBL/GenBank/DDBJ databases">
        <title>Large-scale analysis of RIKEN Arabidopsis full-length (RAFL) cDNAs.</title>
        <authorList>
            <person name="Totoki Y."/>
            <person name="Seki M."/>
            <person name="Ishida J."/>
            <person name="Nakajima M."/>
            <person name="Enju A."/>
            <person name="Kamiya A."/>
            <person name="Narusaka M."/>
            <person name="Shin-i T."/>
            <person name="Nakagawa M."/>
            <person name="Sakamoto N."/>
            <person name="Oishi K."/>
            <person name="Kohara Y."/>
            <person name="Kobayashi M."/>
            <person name="Toyoda A."/>
            <person name="Sakaki Y."/>
            <person name="Sakurai T."/>
            <person name="Iida K."/>
            <person name="Akiyama K."/>
            <person name="Satou M."/>
            <person name="Toyoda T."/>
            <person name="Konagaya A."/>
            <person name="Carninci P."/>
            <person name="Kawai J."/>
            <person name="Hayashizaki Y."/>
            <person name="Shinozaki K."/>
        </authorList>
    </citation>
    <scope>NUCLEOTIDE SEQUENCE [LARGE SCALE MRNA]</scope>
    <source>
        <strain>cv. Columbia</strain>
    </source>
</reference>
<dbReference type="EMBL" id="AL021710">
    <property type="protein sequence ID" value="CAA16739.1"/>
    <property type="status" value="ALT_SEQ"/>
    <property type="molecule type" value="Genomic_DNA"/>
</dbReference>
<dbReference type="EMBL" id="AL161549">
    <property type="protein sequence ID" value="CAB78861.1"/>
    <property type="status" value="ALT_SEQ"/>
    <property type="molecule type" value="Genomic_DNA"/>
</dbReference>
<dbReference type="EMBL" id="CP002687">
    <property type="protein sequence ID" value="AEE84066.1"/>
    <property type="molecule type" value="Genomic_DNA"/>
</dbReference>
<dbReference type="EMBL" id="BT011668">
    <property type="protein sequence ID" value="AAS47674.1"/>
    <property type="molecule type" value="mRNA"/>
</dbReference>
<dbReference type="EMBL" id="AK221500">
    <property type="protein sequence ID" value="BAD94719.1"/>
    <property type="molecule type" value="mRNA"/>
</dbReference>
<dbReference type="RefSeq" id="NP_001319985.1">
    <property type="nucleotide sequence ID" value="NM_001341296.1"/>
</dbReference>
<dbReference type="SMR" id="Q6NMJ2"/>
<dbReference type="FunCoup" id="Q6NMJ2">
    <property type="interactions" value="44"/>
</dbReference>
<dbReference type="STRING" id="3702.Q6NMJ2"/>
<dbReference type="GlyGen" id="Q6NMJ2">
    <property type="glycosylation" value="1 site"/>
</dbReference>
<dbReference type="PaxDb" id="3702-AT4G18596.1"/>
<dbReference type="ProteomicsDB" id="250904"/>
<dbReference type="EnsemblPlants" id="AT4G18596.1">
    <property type="protein sequence ID" value="AT4G18596.1"/>
    <property type="gene ID" value="AT4G18596"/>
</dbReference>
<dbReference type="GeneID" id="827593"/>
<dbReference type="Gramene" id="AT4G18596.1">
    <property type="protein sequence ID" value="AT4G18596.1"/>
    <property type="gene ID" value="AT4G18596"/>
</dbReference>
<dbReference type="KEGG" id="ath:AT4G18596"/>
<dbReference type="Araport" id="AT4G18596"/>
<dbReference type="TAIR" id="AT4G18596"/>
<dbReference type="eggNOG" id="ENOG502S1QR">
    <property type="taxonomic scope" value="Eukaryota"/>
</dbReference>
<dbReference type="HOGENOM" id="CLU_094008_2_1_1"/>
<dbReference type="InParanoid" id="Q6NMJ2"/>
<dbReference type="PhylomeDB" id="Q6NMJ2"/>
<dbReference type="PRO" id="PR:Q6NMJ2"/>
<dbReference type="Proteomes" id="UP000006548">
    <property type="component" value="Chromosome 4"/>
</dbReference>
<dbReference type="ExpressionAtlas" id="Q6NMJ2">
    <property type="expression patterns" value="baseline and differential"/>
</dbReference>
<dbReference type="GO" id="GO:0005615">
    <property type="term" value="C:extracellular space"/>
    <property type="evidence" value="ECO:0007669"/>
    <property type="project" value="InterPro"/>
</dbReference>
<dbReference type="InterPro" id="IPR006040">
    <property type="entry name" value="Allergen_Ole_e_I_CS"/>
</dbReference>
<dbReference type="InterPro" id="IPR006041">
    <property type="entry name" value="Pollen_Ole_e1_allergen"/>
</dbReference>
<dbReference type="PANTHER" id="PTHR31614:SF27">
    <property type="entry name" value="(RAPE) HYPOTHETICAL PROTEIN"/>
    <property type="match status" value="1"/>
</dbReference>
<dbReference type="PANTHER" id="PTHR31614">
    <property type="entry name" value="PROTEIN DOWNSTREAM OF FLC-RELATED"/>
    <property type="match status" value="1"/>
</dbReference>
<dbReference type="Pfam" id="PF01190">
    <property type="entry name" value="Pollen_Ole_e_1"/>
    <property type="match status" value="1"/>
</dbReference>
<dbReference type="PROSITE" id="PS00925">
    <property type="entry name" value="OLEEI"/>
    <property type="match status" value="1"/>
</dbReference>
<sequence>MASKAIFFFFVSAVCLSSLAGVAIADADDFDRFQIQGSVYCDTCRVQFVTRLSKFLEGAKVKLECRSRTNGTVTLTKEAVTDKTGSYRMEVTGDHEEEVCELVLVESPDSGCSDVSKEAYLRNAAKISLTANDGIVSHETRIVNPLGFMVQTPSAECPAAFKELGIVPDVTF</sequence>
<name>OLE96_ARATH</name>
<evidence type="ECO:0000250" key="1"/>
<evidence type="ECO:0000255" key="2"/>
<evidence type="ECO:0000305" key="3"/>